<organism>
    <name type="scientific">Oceanobacillus iheyensis (strain DSM 14371 / CIP 107618 / JCM 11309 / KCTC 3954 / HTE831)</name>
    <dbReference type="NCBI Taxonomy" id="221109"/>
    <lineage>
        <taxon>Bacteria</taxon>
        <taxon>Bacillati</taxon>
        <taxon>Bacillota</taxon>
        <taxon>Bacilli</taxon>
        <taxon>Bacillales</taxon>
        <taxon>Bacillaceae</taxon>
        <taxon>Oceanobacillus</taxon>
    </lineage>
</organism>
<evidence type="ECO:0000255" key="1">
    <source>
        <dbReference type="HAMAP-Rule" id="MF_00300"/>
    </source>
</evidence>
<feature type="chain" id="PRO_0000140621" description="Chorismate synthase">
    <location>
        <begin position="1"/>
        <end position="389"/>
    </location>
</feature>
<feature type="binding site" evidence="1">
    <location>
        <position position="39"/>
    </location>
    <ligand>
        <name>NADP(+)</name>
        <dbReference type="ChEBI" id="CHEBI:58349"/>
    </ligand>
</feature>
<feature type="binding site" evidence="1">
    <location>
        <position position="45"/>
    </location>
    <ligand>
        <name>NADP(+)</name>
        <dbReference type="ChEBI" id="CHEBI:58349"/>
    </ligand>
</feature>
<feature type="binding site" evidence="1">
    <location>
        <begin position="130"/>
        <end position="132"/>
    </location>
    <ligand>
        <name>FMN</name>
        <dbReference type="ChEBI" id="CHEBI:58210"/>
    </ligand>
</feature>
<feature type="binding site" evidence="1">
    <location>
        <begin position="251"/>
        <end position="252"/>
    </location>
    <ligand>
        <name>FMN</name>
        <dbReference type="ChEBI" id="CHEBI:58210"/>
    </ligand>
</feature>
<feature type="binding site" evidence="1">
    <location>
        <position position="296"/>
    </location>
    <ligand>
        <name>FMN</name>
        <dbReference type="ChEBI" id="CHEBI:58210"/>
    </ligand>
</feature>
<feature type="binding site" evidence="1">
    <location>
        <begin position="311"/>
        <end position="315"/>
    </location>
    <ligand>
        <name>FMN</name>
        <dbReference type="ChEBI" id="CHEBI:58210"/>
    </ligand>
</feature>
<feature type="binding site" evidence="1">
    <location>
        <position position="338"/>
    </location>
    <ligand>
        <name>FMN</name>
        <dbReference type="ChEBI" id="CHEBI:58210"/>
    </ligand>
</feature>
<name>AROC_OCEIH</name>
<accession>Q8EQB6</accession>
<gene>
    <name evidence="1" type="primary">aroC</name>
    <name type="ordered locus">OB1785</name>
</gene>
<dbReference type="EC" id="4.2.3.5" evidence="1"/>
<dbReference type="EMBL" id="BA000028">
    <property type="protein sequence ID" value="BAC13741.1"/>
    <property type="molecule type" value="Genomic_DNA"/>
</dbReference>
<dbReference type="RefSeq" id="WP_011066184.1">
    <property type="nucleotide sequence ID" value="NC_004193.1"/>
</dbReference>
<dbReference type="SMR" id="Q8EQB6"/>
<dbReference type="STRING" id="221109.gene:10734025"/>
<dbReference type="KEGG" id="oih:OB1785"/>
<dbReference type="eggNOG" id="COG0082">
    <property type="taxonomic scope" value="Bacteria"/>
</dbReference>
<dbReference type="HOGENOM" id="CLU_034547_2_0_9"/>
<dbReference type="OrthoDB" id="9771806at2"/>
<dbReference type="PhylomeDB" id="Q8EQB6"/>
<dbReference type="UniPathway" id="UPA00053">
    <property type="reaction ID" value="UER00090"/>
</dbReference>
<dbReference type="Proteomes" id="UP000000822">
    <property type="component" value="Chromosome"/>
</dbReference>
<dbReference type="GO" id="GO:0005829">
    <property type="term" value="C:cytosol"/>
    <property type="evidence" value="ECO:0007669"/>
    <property type="project" value="TreeGrafter"/>
</dbReference>
<dbReference type="GO" id="GO:0004107">
    <property type="term" value="F:chorismate synthase activity"/>
    <property type="evidence" value="ECO:0007669"/>
    <property type="project" value="UniProtKB-UniRule"/>
</dbReference>
<dbReference type="GO" id="GO:0010181">
    <property type="term" value="F:FMN binding"/>
    <property type="evidence" value="ECO:0007669"/>
    <property type="project" value="TreeGrafter"/>
</dbReference>
<dbReference type="GO" id="GO:0008652">
    <property type="term" value="P:amino acid biosynthetic process"/>
    <property type="evidence" value="ECO:0007669"/>
    <property type="project" value="UniProtKB-KW"/>
</dbReference>
<dbReference type="GO" id="GO:0009073">
    <property type="term" value="P:aromatic amino acid family biosynthetic process"/>
    <property type="evidence" value="ECO:0007669"/>
    <property type="project" value="UniProtKB-KW"/>
</dbReference>
<dbReference type="GO" id="GO:0009423">
    <property type="term" value="P:chorismate biosynthetic process"/>
    <property type="evidence" value="ECO:0007669"/>
    <property type="project" value="UniProtKB-UniRule"/>
</dbReference>
<dbReference type="CDD" id="cd07304">
    <property type="entry name" value="Chorismate_synthase"/>
    <property type="match status" value="1"/>
</dbReference>
<dbReference type="FunFam" id="3.60.150.10:FF:000002">
    <property type="entry name" value="Chorismate synthase"/>
    <property type="match status" value="1"/>
</dbReference>
<dbReference type="Gene3D" id="3.60.150.10">
    <property type="entry name" value="Chorismate synthase AroC"/>
    <property type="match status" value="1"/>
</dbReference>
<dbReference type="HAMAP" id="MF_00300">
    <property type="entry name" value="Chorismate_synth"/>
    <property type="match status" value="1"/>
</dbReference>
<dbReference type="InterPro" id="IPR000453">
    <property type="entry name" value="Chorismate_synth"/>
</dbReference>
<dbReference type="InterPro" id="IPR035904">
    <property type="entry name" value="Chorismate_synth_AroC_sf"/>
</dbReference>
<dbReference type="InterPro" id="IPR020541">
    <property type="entry name" value="Chorismate_synthase_CS"/>
</dbReference>
<dbReference type="NCBIfam" id="TIGR00033">
    <property type="entry name" value="aroC"/>
    <property type="match status" value="1"/>
</dbReference>
<dbReference type="NCBIfam" id="NF003793">
    <property type="entry name" value="PRK05382.1"/>
    <property type="match status" value="1"/>
</dbReference>
<dbReference type="PANTHER" id="PTHR21085">
    <property type="entry name" value="CHORISMATE SYNTHASE"/>
    <property type="match status" value="1"/>
</dbReference>
<dbReference type="PANTHER" id="PTHR21085:SF0">
    <property type="entry name" value="CHORISMATE SYNTHASE"/>
    <property type="match status" value="1"/>
</dbReference>
<dbReference type="Pfam" id="PF01264">
    <property type="entry name" value="Chorismate_synt"/>
    <property type="match status" value="1"/>
</dbReference>
<dbReference type="PIRSF" id="PIRSF001456">
    <property type="entry name" value="Chorismate_synth"/>
    <property type="match status" value="1"/>
</dbReference>
<dbReference type="SUPFAM" id="SSF103263">
    <property type="entry name" value="Chorismate synthase, AroC"/>
    <property type="match status" value="1"/>
</dbReference>
<dbReference type="PROSITE" id="PS00787">
    <property type="entry name" value="CHORISMATE_SYNTHASE_1"/>
    <property type="match status" value="1"/>
</dbReference>
<dbReference type="PROSITE" id="PS00788">
    <property type="entry name" value="CHORISMATE_SYNTHASE_2"/>
    <property type="match status" value="1"/>
</dbReference>
<proteinExistence type="inferred from homology"/>
<keyword id="KW-0028">Amino-acid biosynthesis</keyword>
<keyword id="KW-0057">Aromatic amino acid biosynthesis</keyword>
<keyword id="KW-0274">FAD</keyword>
<keyword id="KW-0285">Flavoprotein</keyword>
<keyword id="KW-0288">FMN</keyword>
<keyword id="KW-0456">Lyase</keyword>
<keyword id="KW-0521">NADP</keyword>
<keyword id="KW-1185">Reference proteome</keyword>
<sequence>MRYITSGESHGKQLTTIIEGLPSQLPITAEDINASLRRRQGGHGRGKRMQIEKDTVDIVSGVRHGYTLGSPLSLVIRNDDFKHWTDIMGEEPMEDPSKMRRVVTKPRPGHADLNGALKYGHRDMRNVLERSSARETAARVAAGAVAKKLLKELGIEVSGYVKEIAGIEASDLPELNAQERADKANQSPVMVLDATVEEQMTNAIDQAKKEGDSIGGVCEVYVEGMPAGVGSYVHYDRKLDSRLAGSVVSINAFKGVEFGIGFEAAKRNGSEVHDEIAWDETHGYYRTTNRLGGFEGGMTTGMPIIVRGVMKPIPTLMKRPLTSVDIETKEPFKATVERSDACAVPAASVVMEHVVAFELAKALTEQFSSDQLPQLKKAIDDYREEIRCF</sequence>
<protein>
    <recommendedName>
        <fullName evidence="1">Chorismate synthase</fullName>
        <shortName evidence="1">CS</shortName>
        <ecNumber evidence="1">4.2.3.5</ecNumber>
    </recommendedName>
    <alternativeName>
        <fullName evidence="1">5-enolpyruvylshikimate-3-phosphate phospholyase</fullName>
    </alternativeName>
</protein>
<reference key="1">
    <citation type="journal article" date="2002" name="Nucleic Acids Res.">
        <title>Genome sequence of Oceanobacillus iheyensis isolated from the Iheya Ridge and its unexpected adaptive capabilities to extreme environments.</title>
        <authorList>
            <person name="Takami H."/>
            <person name="Takaki Y."/>
            <person name="Uchiyama I."/>
        </authorList>
    </citation>
    <scope>NUCLEOTIDE SEQUENCE [LARGE SCALE GENOMIC DNA]</scope>
    <source>
        <strain>DSM 14371 / CIP 107618 / JCM 11309 / KCTC 3954 / HTE831</strain>
    </source>
</reference>
<comment type="function">
    <text evidence="1">Catalyzes the anti-1,4-elimination of the C-3 phosphate and the C-6 proR hydrogen from 5-enolpyruvylshikimate-3-phosphate (EPSP) to yield chorismate, which is the branch point compound that serves as the starting substrate for the three terminal pathways of aromatic amino acid biosynthesis. This reaction introduces a second double bond into the aromatic ring system.</text>
</comment>
<comment type="catalytic activity">
    <reaction evidence="1">
        <text>5-O-(1-carboxyvinyl)-3-phosphoshikimate = chorismate + phosphate</text>
        <dbReference type="Rhea" id="RHEA:21020"/>
        <dbReference type="ChEBI" id="CHEBI:29748"/>
        <dbReference type="ChEBI" id="CHEBI:43474"/>
        <dbReference type="ChEBI" id="CHEBI:57701"/>
        <dbReference type="EC" id="4.2.3.5"/>
    </reaction>
</comment>
<comment type="cofactor">
    <cofactor evidence="1">
        <name>FMNH2</name>
        <dbReference type="ChEBI" id="CHEBI:57618"/>
    </cofactor>
    <text evidence="1">Reduced FMN (FMNH(2)).</text>
</comment>
<comment type="pathway">
    <text evidence="1">Metabolic intermediate biosynthesis; chorismate biosynthesis; chorismate from D-erythrose 4-phosphate and phosphoenolpyruvate: step 7/7.</text>
</comment>
<comment type="subunit">
    <text evidence="1">Homotetramer.</text>
</comment>
<comment type="similarity">
    <text evidence="1">Belongs to the chorismate synthase family.</text>
</comment>